<keyword id="KW-0067">ATP-binding</keyword>
<keyword id="KW-0131">Cell cycle</keyword>
<keyword id="KW-0132">Cell division</keyword>
<keyword id="KW-0547">Nucleotide-binding</keyword>
<keyword id="KW-1185">Reference proteome</keyword>
<keyword id="KW-0808">Transferase</keyword>
<keyword id="KW-0833">Ubl conjugation pathway</keyword>
<reference key="1">
    <citation type="journal article" date="2008" name="Nature">
        <title>The amphioxus genome and the evolution of the chordate karyotype.</title>
        <authorList>
            <person name="Putnam N.H."/>
            <person name="Butts T."/>
            <person name="Ferrier D.E.K."/>
            <person name="Furlong R.F."/>
            <person name="Hellsten U."/>
            <person name="Kawashima T."/>
            <person name="Robinson-Rechavi M."/>
            <person name="Shoguchi E."/>
            <person name="Terry A."/>
            <person name="Yu J.-K."/>
            <person name="Benito-Gutierrez E.L."/>
            <person name="Dubchak I."/>
            <person name="Garcia-Fernandez J."/>
            <person name="Gibson-Brown J.J."/>
            <person name="Grigoriev I.V."/>
            <person name="Horton A.C."/>
            <person name="de Jong P.J."/>
            <person name="Jurka J."/>
            <person name="Kapitonov V.V."/>
            <person name="Kohara Y."/>
            <person name="Kuroki Y."/>
            <person name="Lindquist E."/>
            <person name="Lucas S."/>
            <person name="Osoegawa K."/>
            <person name="Pennacchio L.A."/>
            <person name="Salamov A.A."/>
            <person name="Satou Y."/>
            <person name="Sauka-Spengler T."/>
            <person name="Schmutz J."/>
            <person name="Shin-I T."/>
            <person name="Toyoda A."/>
            <person name="Bronner-Fraser M."/>
            <person name="Fujiyama A."/>
            <person name="Holland L.Z."/>
            <person name="Holland P.W.H."/>
            <person name="Satoh N."/>
            <person name="Rokhsar D.S."/>
        </authorList>
    </citation>
    <scope>NUCLEOTIDE SEQUENCE [LARGE SCALE GENOMIC DNA]</scope>
    <source>
        <strain>S238N-H82</strain>
        <tissue>Testis</tissue>
    </source>
</reference>
<protein>
    <recommendedName>
        <fullName>Ubiquitin-conjugating enzyme E2 S</fullName>
        <ecNumber>2.3.2.23</ecNumber>
    </recommendedName>
    <alternativeName>
        <fullName>E2 ubiquitin-conjugating enzyme S</fullName>
    </alternativeName>
    <alternativeName>
        <fullName>Ubiquitin carrier protein S</fullName>
    </alternativeName>
    <alternativeName>
        <fullName>Ubiquitin-protein ligase S</fullName>
    </alternativeName>
</protein>
<accession>C3Z724</accession>
<proteinExistence type="inferred from homology"/>
<feature type="chain" id="PRO_0000390435" description="Ubiquitin-conjugating enzyme E2 S">
    <location>
        <begin position="1"/>
        <end position="213"/>
    </location>
</feature>
<feature type="domain" description="UBC core" evidence="1">
    <location>
        <begin position="13"/>
        <end position="159"/>
    </location>
</feature>
<feature type="region of interest" description="Disordered" evidence="3">
    <location>
        <begin position="157"/>
        <end position="213"/>
    </location>
</feature>
<feature type="compositionally biased region" description="Polar residues" evidence="3">
    <location>
        <begin position="174"/>
        <end position="185"/>
    </location>
</feature>
<feature type="compositionally biased region" description="Basic and acidic residues" evidence="3">
    <location>
        <begin position="192"/>
        <end position="202"/>
    </location>
</feature>
<feature type="compositionally biased region" description="Basic residues" evidence="3">
    <location>
        <begin position="203"/>
        <end position="213"/>
    </location>
</feature>
<feature type="active site" description="Glycyl thioester intermediate" evidence="1 2">
    <location>
        <position position="97"/>
    </location>
</feature>
<gene>
    <name type="ORF">BRAFLDRAFT_259979</name>
</gene>
<name>UBE2S_BRAFL</name>
<organism>
    <name type="scientific">Branchiostoma floridae</name>
    <name type="common">Florida lancelet</name>
    <name type="synonym">Amphioxus</name>
    <dbReference type="NCBI Taxonomy" id="7739"/>
    <lineage>
        <taxon>Eukaryota</taxon>
        <taxon>Metazoa</taxon>
        <taxon>Chordata</taxon>
        <taxon>Cephalochordata</taxon>
        <taxon>Leptocardii</taxon>
        <taxon>Amphioxiformes</taxon>
        <taxon>Branchiostomatidae</taxon>
        <taxon>Branchiostoma</taxon>
    </lineage>
</organism>
<comment type="function">
    <text evidence="1">Catalyzes the covalent attachment of ubiquitin to other proteins. Acts as an essential factor of the anaphase promoting complex/cyclosome (APC/C), a cell cycle-regulated ubiquitin ligase that controls progression through mitosis. Acts by specifically elongating polyubiquitin chains initiated by the E2 enzyme UBCH10 on APC/C substrates, enhancing the degradation of APC/C substrates by the proteasome and promoting mitotic exit.</text>
</comment>
<comment type="catalytic activity">
    <reaction evidence="1 2">
        <text>S-ubiquitinyl-[E1 ubiquitin-activating enzyme]-L-cysteine + [E2 ubiquitin-conjugating enzyme]-L-cysteine = [E1 ubiquitin-activating enzyme]-L-cysteine + S-ubiquitinyl-[E2 ubiquitin-conjugating enzyme]-L-cysteine.</text>
        <dbReference type="EC" id="2.3.2.23"/>
    </reaction>
</comment>
<comment type="pathway">
    <text evidence="1">Protein modification; protein ubiquitination.</text>
</comment>
<comment type="similarity">
    <text evidence="1">Belongs to the ubiquitin-conjugating enzyme family.</text>
</comment>
<sequence length="213" mass="23522">MSGSSNVENLSPQIIRQVAKEVLDLANHPPEGVKVFPNEQDITDVQATIEGPGGTPYEGGQFKIKLSLGKDFPQTPPKGFFLTKIFHPNVAKNGEICVNTLKKDWKADLGLKHILLTIKCLLIYPNPESALNEEAGKLLLEQYDNYSERARMMTEIHAKPTTKTAPTKNEETNCPSTSGTQSTSEGPMAKKHAGDKNAAEKKKKEKKRALRRL</sequence>
<dbReference type="EC" id="2.3.2.23"/>
<dbReference type="EMBL" id="GG666590">
    <property type="protein sequence ID" value="EEN51620.1"/>
    <property type="molecule type" value="Genomic_DNA"/>
</dbReference>
<dbReference type="RefSeq" id="XP_002595608.1">
    <property type="nucleotide sequence ID" value="XM_002595562.1"/>
</dbReference>
<dbReference type="SMR" id="C3Z724"/>
<dbReference type="STRING" id="7739.C3Z724"/>
<dbReference type="eggNOG" id="KOG0423">
    <property type="taxonomic scope" value="Eukaryota"/>
</dbReference>
<dbReference type="InParanoid" id="C3Z724"/>
<dbReference type="OMA" id="QPAKCGA"/>
<dbReference type="OrthoDB" id="10069349at2759"/>
<dbReference type="UniPathway" id="UPA00143"/>
<dbReference type="Proteomes" id="UP000001554">
    <property type="component" value="Unplaced"/>
</dbReference>
<dbReference type="GO" id="GO:0005680">
    <property type="term" value="C:anaphase-promoting complex"/>
    <property type="evidence" value="ECO:0000250"/>
    <property type="project" value="UniProtKB"/>
</dbReference>
<dbReference type="GO" id="GO:0005634">
    <property type="term" value="C:nucleus"/>
    <property type="evidence" value="ECO:0000318"/>
    <property type="project" value="GO_Central"/>
</dbReference>
<dbReference type="GO" id="GO:0005524">
    <property type="term" value="F:ATP binding"/>
    <property type="evidence" value="ECO:0007669"/>
    <property type="project" value="UniProtKB-KW"/>
</dbReference>
<dbReference type="GO" id="GO:0061631">
    <property type="term" value="F:ubiquitin conjugating enzyme activity"/>
    <property type="evidence" value="ECO:0000318"/>
    <property type="project" value="GO_Central"/>
</dbReference>
<dbReference type="GO" id="GO:0031145">
    <property type="term" value="P:anaphase-promoting complex-dependent catabolic process"/>
    <property type="evidence" value="ECO:0000250"/>
    <property type="project" value="UniProtKB"/>
</dbReference>
<dbReference type="GO" id="GO:0051301">
    <property type="term" value="P:cell division"/>
    <property type="evidence" value="ECO:0007669"/>
    <property type="project" value="UniProtKB-KW"/>
</dbReference>
<dbReference type="GO" id="GO:0010458">
    <property type="term" value="P:exit from mitosis"/>
    <property type="evidence" value="ECO:0000250"/>
    <property type="project" value="UniProtKB"/>
</dbReference>
<dbReference type="GO" id="GO:0010994">
    <property type="term" value="P:free ubiquitin chain polymerization"/>
    <property type="evidence" value="ECO:0000250"/>
    <property type="project" value="UniProtKB"/>
</dbReference>
<dbReference type="GO" id="GO:1904668">
    <property type="term" value="P:positive regulation of ubiquitin protein ligase activity"/>
    <property type="evidence" value="ECO:0000250"/>
    <property type="project" value="UniProtKB"/>
</dbReference>
<dbReference type="GO" id="GO:0070979">
    <property type="term" value="P:protein K11-linked ubiquitination"/>
    <property type="evidence" value="ECO:0000250"/>
    <property type="project" value="UniProtKB"/>
</dbReference>
<dbReference type="GO" id="GO:0000209">
    <property type="term" value="P:protein polyubiquitination"/>
    <property type="evidence" value="ECO:0000318"/>
    <property type="project" value="GO_Central"/>
</dbReference>
<dbReference type="GO" id="GO:0006511">
    <property type="term" value="P:ubiquitin-dependent protein catabolic process"/>
    <property type="evidence" value="ECO:0000318"/>
    <property type="project" value="GO_Central"/>
</dbReference>
<dbReference type="CDD" id="cd23804">
    <property type="entry name" value="UBCc_UBE2S"/>
    <property type="match status" value="1"/>
</dbReference>
<dbReference type="FunFam" id="3.10.110.10:FF:000034">
    <property type="entry name" value="Ubiquitin-conjugating enzyme E2 S"/>
    <property type="match status" value="1"/>
</dbReference>
<dbReference type="Gene3D" id="3.10.110.10">
    <property type="entry name" value="Ubiquitin Conjugating Enzyme"/>
    <property type="match status" value="1"/>
</dbReference>
<dbReference type="InterPro" id="IPR050113">
    <property type="entry name" value="Ub_conjugating_enzyme"/>
</dbReference>
<dbReference type="InterPro" id="IPR000608">
    <property type="entry name" value="UBQ-conjugat_E2_core"/>
</dbReference>
<dbReference type="InterPro" id="IPR023313">
    <property type="entry name" value="UBQ-conjugating_AS"/>
</dbReference>
<dbReference type="InterPro" id="IPR016135">
    <property type="entry name" value="UBQ-conjugating_enzyme/RWD"/>
</dbReference>
<dbReference type="PANTHER" id="PTHR24067">
    <property type="entry name" value="UBIQUITIN-CONJUGATING ENZYME E2"/>
    <property type="match status" value="1"/>
</dbReference>
<dbReference type="Pfam" id="PF00179">
    <property type="entry name" value="UQ_con"/>
    <property type="match status" value="1"/>
</dbReference>
<dbReference type="SMART" id="SM00212">
    <property type="entry name" value="UBCc"/>
    <property type="match status" value="1"/>
</dbReference>
<dbReference type="SUPFAM" id="SSF54495">
    <property type="entry name" value="UBC-like"/>
    <property type="match status" value="1"/>
</dbReference>
<dbReference type="PROSITE" id="PS00183">
    <property type="entry name" value="UBC_1"/>
    <property type="match status" value="1"/>
</dbReference>
<dbReference type="PROSITE" id="PS50127">
    <property type="entry name" value="UBC_2"/>
    <property type="match status" value="1"/>
</dbReference>
<evidence type="ECO:0000255" key="1">
    <source>
        <dbReference type="PROSITE-ProRule" id="PRU00388"/>
    </source>
</evidence>
<evidence type="ECO:0000255" key="2">
    <source>
        <dbReference type="PROSITE-ProRule" id="PRU10133"/>
    </source>
</evidence>
<evidence type="ECO:0000256" key="3">
    <source>
        <dbReference type="SAM" id="MobiDB-lite"/>
    </source>
</evidence>